<dbReference type="EC" id="6.3.2.14" evidence="1"/>
<dbReference type="EC" id="6.2.1.72" evidence="1"/>
<dbReference type="EMBL" id="AE005674">
    <property type="protein sequence ID" value="AAN42148.1"/>
    <property type="molecule type" value="Genomic_DNA"/>
</dbReference>
<dbReference type="EMBL" id="AE014073">
    <property type="protein sequence ID" value="AAP16020.1"/>
    <property type="molecule type" value="Genomic_DNA"/>
</dbReference>
<dbReference type="EMBL" id="M63304">
    <property type="status" value="NOT_ANNOTATED_CDS"/>
    <property type="molecule type" value="Genomic_DNA"/>
</dbReference>
<dbReference type="RefSeq" id="NP_706441.1">
    <property type="nucleotide sequence ID" value="NC_004337.2"/>
</dbReference>
<dbReference type="RefSeq" id="WP_000077741.1">
    <property type="nucleotide sequence ID" value="NZ_UDUU01000106.1"/>
</dbReference>
<dbReference type="SMR" id="P29698"/>
<dbReference type="STRING" id="198214.SF0498"/>
<dbReference type="ESTHER" id="shifl-entf">
    <property type="family name" value="Thioesterase"/>
</dbReference>
<dbReference type="PaxDb" id="198214-SF0498"/>
<dbReference type="GeneID" id="1023397"/>
<dbReference type="KEGG" id="sfl:SF0498"/>
<dbReference type="KEGG" id="sfx:S0504"/>
<dbReference type="PATRIC" id="fig|198214.7.peg.578"/>
<dbReference type="HOGENOM" id="CLU_000022_2_13_6"/>
<dbReference type="UniPathway" id="UPA00017"/>
<dbReference type="Proteomes" id="UP000001006">
    <property type="component" value="Chromosome"/>
</dbReference>
<dbReference type="Proteomes" id="UP000002673">
    <property type="component" value="Chromosome"/>
</dbReference>
<dbReference type="GO" id="GO:0005829">
    <property type="term" value="C:cytosol"/>
    <property type="evidence" value="ECO:0000250"/>
    <property type="project" value="UniProtKB"/>
</dbReference>
<dbReference type="GO" id="GO:0009366">
    <property type="term" value="C:enterobactin synthetase complex"/>
    <property type="evidence" value="ECO:0000250"/>
    <property type="project" value="UniProtKB"/>
</dbReference>
<dbReference type="GO" id="GO:0005886">
    <property type="term" value="C:plasma membrane"/>
    <property type="evidence" value="ECO:0000250"/>
    <property type="project" value="UniProtKB"/>
</dbReference>
<dbReference type="GO" id="GO:0047527">
    <property type="term" value="F:2,3-dihydroxybenzoate-serine ligase activity"/>
    <property type="evidence" value="ECO:0000250"/>
    <property type="project" value="UniProtKB"/>
</dbReference>
<dbReference type="GO" id="GO:0005524">
    <property type="term" value="F:ATP binding"/>
    <property type="evidence" value="ECO:0007669"/>
    <property type="project" value="UniProtKB-KW"/>
</dbReference>
<dbReference type="GO" id="GO:0016779">
    <property type="term" value="F:nucleotidyltransferase activity"/>
    <property type="evidence" value="ECO:0000250"/>
    <property type="project" value="UniProtKB"/>
</dbReference>
<dbReference type="GO" id="GO:0031177">
    <property type="term" value="F:phosphopantetheine binding"/>
    <property type="evidence" value="ECO:0000250"/>
    <property type="project" value="UniProtKB"/>
</dbReference>
<dbReference type="GO" id="GO:0043041">
    <property type="term" value="P:amino acid activation for nonribosomal peptide biosynthetic process"/>
    <property type="evidence" value="ECO:0000250"/>
    <property type="project" value="UniProtKB"/>
</dbReference>
<dbReference type="GO" id="GO:0009239">
    <property type="term" value="P:enterobactin biosynthetic process"/>
    <property type="evidence" value="ECO:0000250"/>
    <property type="project" value="UniProtKB"/>
</dbReference>
<dbReference type="CDD" id="cd17646">
    <property type="entry name" value="A_NRPS_AB3403-like"/>
    <property type="match status" value="1"/>
</dbReference>
<dbReference type="CDD" id="cd19533">
    <property type="entry name" value="starter-C_NRPS"/>
    <property type="match status" value="1"/>
</dbReference>
<dbReference type="FunFam" id="2.30.38.10:FF:000002">
    <property type="entry name" value="Enterobactin synthase component F"/>
    <property type="match status" value="1"/>
</dbReference>
<dbReference type="FunFam" id="3.30.300.30:FF:000010">
    <property type="entry name" value="Enterobactin synthetase component F"/>
    <property type="match status" value="1"/>
</dbReference>
<dbReference type="FunFam" id="3.30.559.10:FF:000020">
    <property type="entry name" value="Enterobactin synthetase component F"/>
    <property type="match status" value="1"/>
</dbReference>
<dbReference type="FunFam" id="3.30.559.30:FF:000004">
    <property type="entry name" value="Enterobactin synthetase component F"/>
    <property type="match status" value="1"/>
</dbReference>
<dbReference type="FunFam" id="3.40.50.980:FF:000002">
    <property type="entry name" value="Enterobactin synthetase component F"/>
    <property type="match status" value="1"/>
</dbReference>
<dbReference type="FunFam" id="3.40.50.12780:FF:000012">
    <property type="entry name" value="Non-ribosomal peptide synthetase"/>
    <property type="match status" value="1"/>
</dbReference>
<dbReference type="Gene3D" id="3.30.300.30">
    <property type="match status" value="1"/>
</dbReference>
<dbReference type="Gene3D" id="3.40.50.980">
    <property type="match status" value="2"/>
</dbReference>
<dbReference type="Gene3D" id="3.40.50.1820">
    <property type="entry name" value="alpha/beta hydrolase"/>
    <property type="match status" value="1"/>
</dbReference>
<dbReference type="Gene3D" id="3.30.559.10">
    <property type="entry name" value="Chloramphenicol acetyltransferase-like domain"/>
    <property type="match status" value="1"/>
</dbReference>
<dbReference type="Gene3D" id="2.30.38.10">
    <property type="entry name" value="Luciferase, Domain 3"/>
    <property type="match status" value="1"/>
</dbReference>
<dbReference type="Gene3D" id="3.30.559.30">
    <property type="entry name" value="Nonribosomal peptide synthetase, condensation domain"/>
    <property type="match status" value="1"/>
</dbReference>
<dbReference type="InterPro" id="IPR010071">
    <property type="entry name" value="AA_adenyl_dom"/>
</dbReference>
<dbReference type="InterPro" id="IPR029058">
    <property type="entry name" value="AB_hydrolase_fold"/>
</dbReference>
<dbReference type="InterPro" id="IPR036736">
    <property type="entry name" value="ACP-like_sf"/>
</dbReference>
<dbReference type="InterPro" id="IPR045851">
    <property type="entry name" value="AMP-bd_C_sf"/>
</dbReference>
<dbReference type="InterPro" id="IPR020845">
    <property type="entry name" value="AMP-binding_CS"/>
</dbReference>
<dbReference type="InterPro" id="IPR000873">
    <property type="entry name" value="AMP-dep_synth/lig_dom"/>
</dbReference>
<dbReference type="InterPro" id="IPR023213">
    <property type="entry name" value="CAT-like_dom_sf"/>
</dbReference>
<dbReference type="InterPro" id="IPR001242">
    <property type="entry name" value="Condensatn"/>
</dbReference>
<dbReference type="InterPro" id="IPR020806">
    <property type="entry name" value="PKS_PP-bd"/>
</dbReference>
<dbReference type="InterPro" id="IPR009081">
    <property type="entry name" value="PP-bd_ACP"/>
</dbReference>
<dbReference type="InterPro" id="IPR006162">
    <property type="entry name" value="Ppantetheine_attach_site"/>
</dbReference>
<dbReference type="InterPro" id="IPR001031">
    <property type="entry name" value="Thioesterase"/>
</dbReference>
<dbReference type="NCBIfam" id="TIGR01733">
    <property type="entry name" value="AA-adenyl-dom"/>
    <property type="match status" value="1"/>
</dbReference>
<dbReference type="NCBIfam" id="NF007605">
    <property type="entry name" value="PRK10252.1"/>
    <property type="match status" value="1"/>
</dbReference>
<dbReference type="PANTHER" id="PTHR45527:SF1">
    <property type="entry name" value="FATTY ACID SYNTHASE"/>
    <property type="match status" value="1"/>
</dbReference>
<dbReference type="PANTHER" id="PTHR45527">
    <property type="entry name" value="NONRIBOSOMAL PEPTIDE SYNTHETASE"/>
    <property type="match status" value="1"/>
</dbReference>
<dbReference type="Pfam" id="PF00501">
    <property type="entry name" value="AMP-binding"/>
    <property type="match status" value="1"/>
</dbReference>
<dbReference type="Pfam" id="PF00668">
    <property type="entry name" value="Condensation"/>
    <property type="match status" value="1"/>
</dbReference>
<dbReference type="Pfam" id="PF00550">
    <property type="entry name" value="PP-binding"/>
    <property type="match status" value="1"/>
</dbReference>
<dbReference type="Pfam" id="PF00975">
    <property type="entry name" value="Thioesterase"/>
    <property type="match status" value="1"/>
</dbReference>
<dbReference type="SMART" id="SM00823">
    <property type="entry name" value="PKS_PP"/>
    <property type="match status" value="1"/>
</dbReference>
<dbReference type="SUPFAM" id="SSF56801">
    <property type="entry name" value="Acetyl-CoA synthetase-like"/>
    <property type="match status" value="1"/>
</dbReference>
<dbReference type="SUPFAM" id="SSF47336">
    <property type="entry name" value="ACP-like"/>
    <property type="match status" value="1"/>
</dbReference>
<dbReference type="SUPFAM" id="SSF53474">
    <property type="entry name" value="alpha/beta-Hydrolases"/>
    <property type="match status" value="1"/>
</dbReference>
<dbReference type="SUPFAM" id="SSF52777">
    <property type="entry name" value="CoA-dependent acyltransferases"/>
    <property type="match status" value="2"/>
</dbReference>
<dbReference type="PROSITE" id="PS00455">
    <property type="entry name" value="AMP_BINDING"/>
    <property type="match status" value="1"/>
</dbReference>
<dbReference type="PROSITE" id="PS50075">
    <property type="entry name" value="CARRIER"/>
    <property type="match status" value="1"/>
</dbReference>
<dbReference type="PROSITE" id="PS00012">
    <property type="entry name" value="PHOSPHOPANTETHEINE"/>
    <property type="match status" value="1"/>
</dbReference>
<name>ENTF_SHIFL</name>
<protein>
    <recommendedName>
        <fullName evidence="1">Enterobactin synthase component F</fullName>
        <ecNumber evidence="1">6.3.2.14</ecNumber>
    </recommendedName>
    <alternativeName>
        <fullName evidence="1">Enterochelin synthase F</fullName>
    </alternativeName>
    <alternativeName>
        <fullName evidence="1">Nonribosomal peptide synthetase EntF</fullName>
    </alternativeName>
    <domain>
        <recommendedName>
            <fullName evidence="1">L-serine--[L-seryl-carrier protein] ligase</fullName>
            <ecNumber evidence="1">6.2.1.72</ecNumber>
        </recommendedName>
        <alternativeName>
            <fullName evidence="1">Serine-activating enzyme</fullName>
        </alternativeName>
        <alternativeName>
            <fullName evidence="1">Seryl-AMP ligase</fullName>
        </alternativeName>
    </domain>
</protein>
<feature type="chain" id="PRO_0000193079" description="Enterobactin synthase component F">
    <location>
        <begin position="1"/>
        <end position="1281"/>
    </location>
</feature>
<feature type="domain" description="Carrier" evidence="2">
    <location>
        <begin position="975"/>
        <end position="1050"/>
    </location>
</feature>
<feature type="region of interest" description="Elongation/condensation" evidence="3">
    <location>
        <begin position="1"/>
        <end position="301"/>
    </location>
</feature>
<feature type="region of interest" description="Adenylation" evidence="3">
    <location>
        <begin position="486"/>
        <end position="891"/>
    </location>
</feature>
<feature type="region of interest" description="Thioesterase" evidence="3">
    <location>
        <begin position="1070"/>
        <end position="1281"/>
    </location>
</feature>
<feature type="active site" description="Proton acceptor; for thioesterase activity" evidence="1">
    <location>
        <position position="1259"/>
    </location>
</feature>
<feature type="modified residue" description="O-(pantetheine 4'-phosphoryl)serine" evidence="1">
    <location>
        <position position="1010"/>
    </location>
</feature>
<feature type="sequence conflict" description="In Ref. 3; M63304." evidence="3" ref="3">
    <original>AFV</original>
    <variation>TFE</variation>
    <location>
        <begin position="1267"/>
        <end position="1269"/>
    </location>
</feature>
<comment type="function">
    <text evidence="1">Involved in the biosynthesis of the siderophore enterobactin (enterochelin), which is a macrocyclic trimeric lactone of N-(2,3-dihydroxybenzoyl)-serine. EntF catalyzes the activation of L-serine via ATP-dependent PPi exchange reaction to form seryladenylate. Activated L-serine is loaded onto the peptidyl carrier domain via a thioester linkage to the phosphopanthetheine moiety, forming seryl-S-Ppant-EntF. EntF acts then as the sole catalyst for the formation of the three amide and three ester linkages found in enterobactin, using seryladenylate and 2,3-dihydroxybenzoate-S-Ppant-EntB (DHB-S-Ppant-EntB) as substrates, via the formation of a DHB-Ser-S-Ppant-EntF intermediate.</text>
</comment>
<comment type="catalytic activity">
    <reaction evidence="1">
        <text>3 2,3-dihydroxybenzoate + 3 L-serine + 6 ATP = enterobactin + 6 AMP + 6 diphosphate + 4 H(+)</text>
        <dbReference type="Rhea" id="RHEA:30571"/>
        <dbReference type="ChEBI" id="CHEBI:15378"/>
        <dbReference type="ChEBI" id="CHEBI:30616"/>
        <dbReference type="ChEBI" id="CHEBI:33019"/>
        <dbReference type="ChEBI" id="CHEBI:33384"/>
        <dbReference type="ChEBI" id="CHEBI:36654"/>
        <dbReference type="ChEBI" id="CHEBI:77805"/>
        <dbReference type="ChEBI" id="CHEBI:456215"/>
        <dbReference type="EC" id="6.3.2.14"/>
    </reaction>
</comment>
<comment type="catalytic activity">
    <reaction evidence="1">
        <text>holo-[peptidyl-carrier protein] + L-serine + ATP = L-seryl-[peptidyl-carrier protein] + AMP + diphosphate</text>
        <dbReference type="Rhea" id="RHEA:61704"/>
        <dbReference type="Rhea" id="RHEA-COMP:11480"/>
        <dbReference type="Rhea" id="RHEA-COMP:15913"/>
        <dbReference type="ChEBI" id="CHEBI:30616"/>
        <dbReference type="ChEBI" id="CHEBI:33019"/>
        <dbReference type="ChEBI" id="CHEBI:33384"/>
        <dbReference type="ChEBI" id="CHEBI:64479"/>
        <dbReference type="ChEBI" id="CHEBI:144955"/>
        <dbReference type="ChEBI" id="CHEBI:456215"/>
        <dbReference type="EC" id="6.2.1.72"/>
    </reaction>
</comment>
<comment type="cofactor">
    <cofactor evidence="1">
        <name>pantetheine 4'-phosphate</name>
        <dbReference type="ChEBI" id="CHEBI:47942"/>
    </cofactor>
    <text evidence="1">Binds 1 phosphopantetheine covalently.</text>
</comment>
<comment type="pathway">
    <text evidence="1">Siderophore biosynthesis; enterobactin biosynthesis.</text>
</comment>
<comment type="subunit">
    <text evidence="1">Proteins EntB, EntD, EntE and EntF are the component of the enterobactin synthase. Components probably do not form a stable complex. EntF acts as a catalytic monomer.</text>
</comment>
<comment type="subcellular location">
    <subcellularLocation>
        <location evidence="1">Cytoplasm</location>
    </subcellularLocation>
    <text evidence="1">Membrane-associated.</text>
</comment>
<comment type="PTM">
    <text evidence="1">4'-phosphopantetheine is transferred from CoA to a specific serine of apo-EntF by EntD. Holo-EntF so formed is then acylated with seryl-AMP.</text>
</comment>
<comment type="similarity">
    <text evidence="3">Belongs to the ATP-dependent AMP-binding enzyme family. EntF subfamily.</text>
</comment>
<keyword id="KW-0067">ATP-binding</keyword>
<keyword id="KW-0963">Cytoplasm</keyword>
<keyword id="KW-0259">Enterobactin biosynthesis</keyword>
<keyword id="KW-0436">Ligase</keyword>
<keyword id="KW-0511">Multifunctional enzyme</keyword>
<keyword id="KW-0547">Nucleotide-binding</keyword>
<keyword id="KW-0596">Phosphopantetheine</keyword>
<keyword id="KW-0597">Phosphoprotein</keyword>
<keyword id="KW-1185">Reference proteome</keyword>
<keyword id="KW-0808">Transferase</keyword>
<evidence type="ECO:0000250" key="1">
    <source>
        <dbReference type="UniProtKB" id="P11454"/>
    </source>
</evidence>
<evidence type="ECO:0000255" key="2">
    <source>
        <dbReference type="PROSITE-ProRule" id="PRU00258"/>
    </source>
</evidence>
<evidence type="ECO:0000305" key="3"/>
<proteinExistence type="inferred from homology"/>
<sequence>MSQHLPLVAAQPGIWMAEKLSDLPSAWSVAHYVELTGEVDAPLLARAVVAGLAQADTLRMRFTEDNGEVWQWVDDALIFELPEIIDLRTNIDPHGTAQALMLADLQQDLRVDSGKPLVFHQLIQVADNRWYWYQRYHHLLVDGFSFPAITRQIANIYCALLRGEPTPASPFTPFADVVEEYQQYRESEAWQRDAAFWVEQRRQLPPPASLSPAPLAGRSASADILRLKMEFTDGEFRQLATQLSGVQRTDLALALTALWLGRLCNRMDYAAGFIFMRRLGSAALTATGPVLNVLPLGIHIAAQETLPELATRLATRLAAQLKKMRRHQRYDAEQIVRDSGRAAGDEPLFGPVLNIKVFDYQLDIPGVQAQTHTLATGPVNDLELALFPDEHGDLSIEILANKQRYDEPTLIQHAERLKMLIAQFAADPALLCGDVDIMLPGEYAQLAQINATQVEIPETTLSALVAEQAAKTPDAPALADARYLFSYREMHEQVVALANLLRERGVKPGDSVAVALPRSVFLTLALHAIVEAGAAWLPLDTGYPDDRLKMMLEDARPSLLITTDDQLPRFSDVPNLTNLCYNAPLTPQGSAPLQLSQPHHTAYIIFTSGSTGRPKGVMVGQTAIVNRLLWMQNHYPLTGEDVVAQKTPCSFDVSVWEFFWPFIAGAKLVMAEPEAHRDPLAMQQFFAEYGVTTTHFVPSMLAAFVASLTPQTARQSCVTLKQVFCSGEALPADLCREWQQLTGAPLHNLYGPTEAAVDVSWYPAFGEELAQVRGSSVPIGYPVWNTGLRILDAMMHPVPPGVAGDLYLTGIQLAQGYLGRPDLTASRFIADPFAPGERMYRTGDVARWLDNGAVEYLGRSDDQLKIRGQRIELGEIDRVMQALPDVKQAVTHACVINQAAATGGDARQLVGYLVSQSGLPLDTSALQAQLRETLPPHMVPVVLLQLPQLPLSANGKLDRKALPLPELKAQAPGRAPKAGSETIIAAAFASLLGCDVQDADADFFALGGHSLLAMKLAAQLSRQFARQVTPGQVMVASTVAKLATIIDGEEDSSRRMGFETILPLREGNGPTLFCFHPASGFAWQFSVLSRYLDPQWSIIGIQSPRPHGPMQTATNLDEVCEAHLATLLEQQPHGIAARLRARGEQVAFLGLLDTWPPETQNWQEKEANGLDPEVLAEINREREAFLAAQQGSTSTELFTTIEGNYADAVRLLTTAHSVPFDGKATLFVAERTLQEGMSPERAWSPWIAELDIYRQDCAHVDIISPGAFVKIGPIIRATLNR</sequence>
<gene>
    <name type="primary">entF</name>
    <name type="ordered locus">SF0498</name>
    <name type="ordered locus">S0504</name>
</gene>
<reference key="1">
    <citation type="journal article" date="2002" name="Nucleic Acids Res.">
        <title>Genome sequence of Shigella flexneri 2a: insights into pathogenicity through comparison with genomes of Escherichia coli K12 and O157.</title>
        <authorList>
            <person name="Jin Q."/>
            <person name="Yuan Z."/>
            <person name="Xu J."/>
            <person name="Wang Y."/>
            <person name="Shen Y."/>
            <person name="Lu W."/>
            <person name="Wang J."/>
            <person name="Liu H."/>
            <person name="Yang J."/>
            <person name="Yang F."/>
            <person name="Zhang X."/>
            <person name="Zhang J."/>
            <person name="Yang G."/>
            <person name="Wu H."/>
            <person name="Qu D."/>
            <person name="Dong J."/>
            <person name="Sun L."/>
            <person name="Xue Y."/>
            <person name="Zhao A."/>
            <person name="Gao Y."/>
            <person name="Zhu J."/>
            <person name="Kan B."/>
            <person name="Ding K."/>
            <person name="Chen S."/>
            <person name="Cheng H."/>
            <person name="Yao Z."/>
            <person name="He B."/>
            <person name="Chen R."/>
            <person name="Ma D."/>
            <person name="Qiang B."/>
            <person name="Wen Y."/>
            <person name="Hou Y."/>
            <person name="Yu J."/>
        </authorList>
    </citation>
    <scope>NUCLEOTIDE SEQUENCE [LARGE SCALE GENOMIC DNA]</scope>
    <source>
        <strain>301 / Serotype 2a</strain>
    </source>
</reference>
<reference key="2">
    <citation type="journal article" date="2003" name="Infect. Immun.">
        <title>Complete genome sequence and comparative genomics of Shigella flexneri serotype 2a strain 2457T.</title>
        <authorList>
            <person name="Wei J."/>
            <person name="Goldberg M.B."/>
            <person name="Burland V."/>
            <person name="Venkatesan M.M."/>
            <person name="Deng W."/>
            <person name="Fournier G."/>
            <person name="Mayhew G.F."/>
            <person name="Plunkett G. III"/>
            <person name="Rose D.J."/>
            <person name="Darling A."/>
            <person name="Mau B."/>
            <person name="Perna N.T."/>
            <person name="Payne S.M."/>
            <person name="Runyen-Janecky L.J."/>
            <person name="Zhou S."/>
            <person name="Schwartz D.C."/>
            <person name="Blattner F.R."/>
        </authorList>
    </citation>
    <scope>NUCLEOTIDE SEQUENCE [LARGE SCALE GENOMIC DNA]</scope>
    <source>
        <strain>ATCC 700930 / 2457T / Serotype 2a</strain>
    </source>
</reference>
<reference key="3">
    <citation type="journal article" date="1991" name="J. Bacteriol.">
        <title>Genetic analysis of the enterobactin gene cluster in Shigella flexneri.</title>
        <authorList>
            <person name="Schmitt M.P."/>
            <person name="Payne S.M."/>
        </authorList>
    </citation>
    <scope>NUCLEOTIDE SEQUENCE [GENOMIC DNA] OF 1252-1281</scope>
</reference>
<accession>P29698</accession>
<organism>
    <name type="scientific">Shigella flexneri</name>
    <dbReference type="NCBI Taxonomy" id="623"/>
    <lineage>
        <taxon>Bacteria</taxon>
        <taxon>Pseudomonadati</taxon>
        <taxon>Pseudomonadota</taxon>
        <taxon>Gammaproteobacteria</taxon>
        <taxon>Enterobacterales</taxon>
        <taxon>Enterobacteriaceae</taxon>
        <taxon>Shigella</taxon>
    </lineage>
</organism>